<accession>A9MMA3</accession>
<comment type="function">
    <text evidence="1">Synthesizes alpha-1,4-glucan chains using ADP-glucose.</text>
</comment>
<comment type="catalytic activity">
    <reaction evidence="1">
        <text>[(1-&gt;4)-alpha-D-glucosyl](n) + ADP-alpha-D-glucose = [(1-&gt;4)-alpha-D-glucosyl](n+1) + ADP + H(+)</text>
        <dbReference type="Rhea" id="RHEA:18189"/>
        <dbReference type="Rhea" id="RHEA-COMP:9584"/>
        <dbReference type="Rhea" id="RHEA-COMP:9587"/>
        <dbReference type="ChEBI" id="CHEBI:15378"/>
        <dbReference type="ChEBI" id="CHEBI:15444"/>
        <dbReference type="ChEBI" id="CHEBI:57498"/>
        <dbReference type="ChEBI" id="CHEBI:456216"/>
        <dbReference type="EC" id="2.4.1.21"/>
    </reaction>
</comment>
<comment type="pathway">
    <text evidence="1">Glycan biosynthesis; glycogen biosynthesis.</text>
</comment>
<comment type="similarity">
    <text evidence="1">Belongs to the glycosyltransferase 1 family. Bacterial/plant glycogen synthase subfamily.</text>
</comment>
<dbReference type="EC" id="2.4.1.21" evidence="1"/>
<dbReference type="EMBL" id="CP000880">
    <property type="protein sequence ID" value="ABX23882.1"/>
    <property type="molecule type" value="Genomic_DNA"/>
</dbReference>
<dbReference type="SMR" id="A9MMA3"/>
<dbReference type="STRING" id="41514.SARI_04093"/>
<dbReference type="CAZy" id="GT5">
    <property type="family name" value="Glycosyltransferase Family 5"/>
</dbReference>
<dbReference type="KEGG" id="ses:SARI_04093"/>
<dbReference type="HOGENOM" id="CLU_009583_18_4_6"/>
<dbReference type="UniPathway" id="UPA00164"/>
<dbReference type="Proteomes" id="UP000002084">
    <property type="component" value="Chromosome"/>
</dbReference>
<dbReference type="GO" id="GO:0005829">
    <property type="term" value="C:cytosol"/>
    <property type="evidence" value="ECO:0007669"/>
    <property type="project" value="TreeGrafter"/>
</dbReference>
<dbReference type="GO" id="GO:0009011">
    <property type="term" value="F:alpha-1,4-glucan glucosyltransferase (ADP-glucose donor) activity"/>
    <property type="evidence" value="ECO:0007669"/>
    <property type="project" value="UniProtKB-UniRule"/>
</dbReference>
<dbReference type="GO" id="GO:0004373">
    <property type="term" value="F:alpha-1,4-glucan glucosyltransferase (UDP-glucose donor) activity"/>
    <property type="evidence" value="ECO:0007669"/>
    <property type="project" value="InterPro"/>
</dbReference>
<dbReference type="GO" id="GO:0005978">
    <property type="term" value="P:glycogen biosynthetic process"/>
    <property type="evidence" value="ECO:0007669"/>
    <property type="project" value="UniProtKB-UniRule"/>
</dbReference>
<dbReference type="CDD" id="cd03791">
    <property type="entry name" value="GT5_Glycogen_synthase_DULL1-like"/>
    <property type="match status" value="1"/>
</dbReference>
<dbReference type="FunFam" id="3.40.50.2000:FF:000008">
    <property type="entry name" value="Glycogen synthase"/>
    <property type="match status" value="1"/>
</dbReference>
<dbReference type="FunFam" id="3.40.50.2000:FF:000011">
    <property type="entry name" value="Glycogen synthase"/>
    <property type="match status" value="1"/>
</dbReference>
<dbReference type="Gene3D" id="3.40.50.2000">
    <property type="entry name" value="Glycogen Phosphorylase B"/>
    <property type="match status" value="2"/>
</dbReference>
<dbReference type="HAMAP" id="MF_00484">
    <property type="entry name" value="Glycogen_synth"/>
    <property type="match status" value="1"/>
</dbReference>
<dbReference type="InterPro" id="IPR001296">
    <property type="entry name" value="Glyco_trans_1"/>
</dbReference>
<dbReference type="InterPro" id="IPR011835">
    <property type="entry name" value="GS/SS"/>
</dbReference>
<dbReference type="InterPro" id="IPR013534">
    <property type="entry name" value="Starch_synth_cat_dom"/>
</dbReference>
<dbReference type="NCBIfam" id="TIGR02095">
    <property type="entry name" value="glgA"/>
    <property type="match status" value="1"/>
</dbReference>
<dbReference type="NCBIfam" id="NF001899">
    <property type="entry name" value="PRK00654.1-2"/>
    <property type="match status" value="1"/>
</dbReference>
<dbReference type="PANTHER" id="PTHR45825:SF11">
    <property type="entry name" value="ALPHA AMYLASE DOMAIN-CONTAINING PROTEIN"/>
    <property type="match status" value="1"/>
</dbReference>
<dbReference type="PANTHER" id="PTHR45825">
    <property type="entry name" value="GRANULE-BOUND STARCH SYNTHASE 1, CHLOROPLASTIC/AMYLOPLASTIC"/>
    <property type="match status" value="1"/>
</dbReference>
<dbReference type="Pfam" id="PF08323">
    <property type="entry name" value="Glyco_transf_5"/>
    <property type="match status" value="1"/>
</dbReference>
<dbReference type="Pfam" id="PF00534">
    <property type="entry name" value="Glycos_transf_1"/>
    <property type="match status" value="1"/>
</dbReference>
<dbReference type="SUPFAM" id="SSF53756">
    <property type="entry name" value="UDP-Glycosyltransferase/glycogen phosphorylase"/>
    <property type="match status" value="1"/>
</dbReference>
<keyword id="KW-0320">Glycogen biosynthesis</keyword>
<keyword id="KW-0328">Glycosyltransferase</keyword>
<keyword id="KW-1185">Reference proteome</keyword>
<keyword id="KW-0808">Transferase</keyword>
<protein>
    <recommendedName>
        <fullName evidence="1">Glycogen synthase</fullName>
        <ecNumber evidence="1">2.4.1.21</ecNumber>
    </recommendedName>
    <alternativeName>
        <fullName evidence="1">Starch [bacterial glycogen] synthase</fullName>
    </alternativeName>
</protein>
<feature type="chain" id="PRO_1000081330" description="Glycogen synthase">
    <location>
        <begin position="1"/>
        <end position="477"/>
    </location>
</feature>
<feature type="binding site" evidence="1">
    <location>
        <position position="15"/>
    </location>
    <ligand>
        <name>ADP-alpha-D-glucose</name>
        <dbReference type="ChEBI" id="CHEBI:57498"/>
    </ligand>
</feature>
<name>GLGA_SALAR</name>
<evidence type="ECO:0000255" key="1">
    <source>
        <dbReference type="HAMAP-Rule" id="MF_00484"/>
    </source>
</evidence>
<sequence>MQVLHVCSEMFPLLKTGGLADVIGALPAAQIADGIDVRVLLPGFPDIRRGIPDAHVVSRRDTFAGKISLLFGHYNGVGVYLIDAPHLYERPGSPYHDTNLYAYTDNVLRFALLGWVGCEMACGLDPFWRPDVVHAHDWHAGLAPAYLAARGRPAKSVFTVHNLAYQGMFYAKHIDDIELPWSFFNMHGLEFNGQISFLKAGLYYADHITAVSPTYAREITEPQFAYGMEGLLRQRHLEGRLSGVLNGVDEKIWSPESDLLLASRYTRDTLEEKAENKRQLQIAMGLKVNDKVPLFAVVSRLTSQKGLDLVLEALPGLLEQGGQLALLGAGDPVLQEGFLAAAAEHPGQVGVQIGYHEAFSHRIMGGADIILVPSRFEPCGLTQLYGLKYGTLPLVRRTGGLADTVSDSSLENLADGIASGFVFEDSNAWSLLRAIRRAFVLWSRPSLWRFVQRQAMAMDFSWQVAAKSYRELYYRLK</sequence>
<proteinExistence type="inferred from homology"/>
<gene>
    <name evidence="1" type="primary">glgA</name>
    <name type="ordered locus">SARI_04093</name>
</gene>
<organism>
    <name type="scientific">Salmonella arizonae (strain ATCC BAA-731 / CDC346-86 / RSK2980)</name>
    <dbReference type="NCBI Taxonomy" id="41514"/>
    <lineage>
        <taxon>Bacteria</taxon>
        <taxon>Pseudomonadati</taxon>
        <taxon>Pseudomonadota</taxon>
        <taxon>Gammaproteobacteria</taxon>
        <taxon>Enterobacterales</taxon>
        <taxon>Enterobacteriaceae</taxon>
        <taxon>Salmonella</taxon>
    </lineage>
</organism>
<reference key="1">
    <citation type="submission" date="2007-11" db="EMBL/GenBank/DDBJ databases">
        <authorList>
            <consortium name="The Salmonella enterica serovar Arizonae Genome Sequencing Project"/>
            <person name="McClelland M."/>
            <person name="Sanderson E.K."/>
            <person name="Porwollik S."/>
            <person name="Spieth J."/>
            <person name="Clifton W.S."/>
            <person name="Fulton R."/>
            <person name="Chunyan W."/>
            <person name="Wollam A."/>
            <person name="Shah N."/>
            <person name="Pepin K."/>
            <person name="Bhonagiri V."/>
            <person name="Nash W."/>
            <person name="Johnson M."/>
            <person name="Thiruvilangam P."/>
            <person name="Wilson R."/>
        </authorList>
    </citation>
    <scope>NUCLEOTIDE SEQUENCE [LARGE SCALE GENOMIC DNA]</scope>
    <source>
        <strain>ATCC BAA-731 / CDC346-86 / RSK2980</strain>
    </source>
</reference>